<dbReference type="EC" id="6.3.2.6" evidence="1"/>
<dbReference type="EMBL" id="CP000697">
    <property type="protein sequence ID" value="ABQ29618.1"/>
    <property type="molecule type" value="Genomic_DNA"/>
</dbReference>
<dbReference type="RefSeq" id="WP_007422336.1">
    <property type="nucleotide sequence ID" value="NC_009484.1"/>
</dbReference>
<dbReference type="SMR" id="A5FVI6"/>
<dbReference type="STRING" id="349163.Acry_0393"/>
<dbReference type="KEGG" id="acr:Acry_0393"/>
<dbReference type="eggNOG" id="COG0152">
    <property type="taxonomic scope" value="Bacteria"/>
</dbReference>
<dbReference type="HOGENOM" id="CLU_061495_2_0_5"/>
<dbReference type="UniPathway" id="UPA00074">
    <property type="reaction ID" value="UER00131"/>
</dbReference>
<dbReference type="Proteomes" id="UP000000245">
    <property type="component" value="Chromosome"/>
</dbReference>
<dbReference type="GO" id="GO:0005829">
    <property type="term" value="C:cytosol"/>
    <property type="evidence" value="ECO:0007669"/>
    <property type="project" value="TreeGrafter"/>
</dbReference>
<dbReference type="GO" id="GO:0005524">
    <property type="term" value="F:ATP binding"/>
    <property type="evidence" value="ECO:0007669"/>
    <property type="project" value="UniProtKB-KW"/>
</dbReference>
<dbReference type="GO" id="GO:0004639">
    <property type="term" value="F:phosphoribosylaminoimidazolesuccinocarboxamide synthase activity"/>
    <property type="evidence" value="ECO:0007669"/>
    <property type="project" value="UniProtKB-UniRule"/>
</dbReference>
<dbReference type="GO" id="GO:0006189">
    <property type="term" value="P:'de novo' IMP biosynthetic process"/>
    <property type="evidence" value="ECO:0007669"/>
    <property type="project" value="UniProtKB-UniRule"/>
</dbReference>
<dbReference type="GO" id="GO:0009236">
    <property type="term" value="P:cobalamin biosynthetic process"/>
    <property type="evidence" value="ECO:0007669"/>
    <property type="project" value="InterPro"/>
</dbReference>
<dbReference type="CDD" id="cd01415">
    <property type="entry name" value="SAICAR_synt_PurC"/>
    <property type="match status" value="1"/>
</dbReference>
<dbReference type="FunFam" id="3.30.470.20:FF:000006">
    <property type="entry name" value="Phosphoribosylaminoimidazole-succinocarboxamide synthase"/>
    <property type="match status" value="1"/>
</dbReference>
<dbReference type="Gene3D" id="3.30.470.20">
    <property type="entry name" value="ATP-grasp fold, B domain"/>
    <property type="match status" value="1"/>
</dbReference>
<dbReference type="Gene3D" id="3.30.200.20">
    <property type="entry name" value="Phosphorylase Kinase, domain 1"/>
    <property type="match status" value="1"/>
</dbReference>
<dbReference type="HAMAP" id="MF_00137">
    <property type="entry name" value="SAICAR_synth"/>
    <property type="match status" value="1"/>
</dbReference>
<dbReference type="InterPro" id="IPR028923">
    <property type="entry name" value="SAICAR_synt/ADE2_N"/>
</dbReference>
<dbReference type="InterPro" id="IPR033934">
    <property type="entry name" value="SAICAR_synt_PurC"/>
</dbReference>
<dbReference type="InterPro" id="IPR001636">
    <property type="entry name" value="SAICAR_synth"/>
</dbReference>
<dbReference type="InterPro" id="IPR050089">
    <property type="entry name" value="SAICAR_synthetase"/>
</dbReference>
<dbReference type="InterPro" id="IPR018236">
    <property type="entry name" value="SAICAR_synthetase_CS"/>
</dbReference>
<dbReference type="NCBIfam" id="TIGR00081">
    <property type="entry name" value="purC"/>
    <property type="match status" value="1"/>
</dbReference>
<dbReference type="PANTHER" id="PTHR43599">
    <property type="entry name" value="MULTIFUNCTIONAL PROTEIN ADE2"/>
    <property type="match status" value="1"/>
</dbReference>
<dbReference type="PANTHER" id="PTHR43599:SF3">
    <property type="entry name" value="SI:DKEY-6E2.2"/>
    <property type="match status" value="1"/>
</dbReference>
<dbReference type="Pfam" id="PF01259">
    <property type="entry name" value="SAICAR_synt"/>
    <property type="match status" value="1"/>
</dbReference>
<dbReference type="SUPFAM" id="SSF56104">
    <property type="entry name" value="SAICAR synthase-like"/>
    <property type="match status" value="1"/>
</dbReference>
<dbReference type="PROSITE" id="PS01057">
    <property type="entry name" value="SAICAR_SYNTHETASE_1"/>
    <property type="match status" value="1"/>
</dbReference>
<dbReference type="PROSITE" id="PS01058">
    <property type="entry name" value="SAICAR_SYNTHETASE_2"/>
    <property type="match status" value="1"/>
</dbReference>
<reference key="1">
    <citation type="submission" date="2007-05" db="EMBL/GenBank/DDBJ databases">
        <title>Complete sequence of chromosome of Acidiphilium cryptum JF-5.</title>
        <authorList>
            <consortium name="US DOE Joint Genome Institute"/>
            <person name="Copeland A."/>
            <person name="Lucas S."/>
            <person name="Lapidus A."/>
            <person name="Barry K."/>
            <person name="Detter J.C."/>
            <person name="Glavina del Rio T."/>
            <person name="Hammon N."/>
            <person name="Israni S."/>
            <person name="Dalin E."/>
            <person name="Tice H."/>
            <person name="Pitluck S."/>
            <person name="Sims D."/>
            <person name="Brettin T."/>
            <person name="Bruce D."/>
            <person name="Han C."/>
            <person name="Schmutz J."/>
            <person name="Larimer F."/>
            <person name="Land M."/>
            <person name="Hauser L."/>
            <person name="Kyrpides N."/>
            <person name="Kim E."/>
            <person name="Magnuson T."/>
            <person name="Richardson P."/>
        </authorList>
    </citation>
    <scope>NUCLEOTIDE SEQUENCE [LARGE SCALE GENOMIC DNA]</scope>
    <source>
        <strain>JF-5</strain>
    </source>
</reference>
<accession>A5FVI6</accession>
<protein>
    <recommendedName>
        <fullName evidence="1">Phosphoribosylaminoimidazole-succinocarboxamide synthase</fullName>
        <ecNumber evidence="1">6.3.2.6</ecNumber>
    </recommendedName>
    <alternativeName>
        <fullName evidence="1">SAICAR synthetase</fullName>
    </alternativeName>
</protein>
<proteinExistence type="inferred from homology"/>
<comment type="catalytic activity">
    <reaction evidence="1">
        <text>5-amino-1-(5-phospho-D-ribosyl)imidazole-4-carboxylate + L-aspartate + ATP = (2S)-2-[5-amino-1-(5-phospho-beta-D-ribosyl)imidazole-4-carboxamido]succinate + ADP + phosphate + 2 H(+)</text>
        <dbReference type="Rhea" id="RHEA:22628"/>
        <dbReference type="ChEBI" id="CHEBI:15378"/>
        <dbReference type="ChEBI" id="CHEBI:29991"/>
        <dbReference type="ChEBI" id="CHEBI:30616"/>
        <dbReference type="ChEBI" id="CHEBI:43474"/>
        <dbReference type="ChEBI" id="CHEBI:58443"/>
        <dbReference type="ChEBI" id="CHEBI:77657"/>
        <dbReference type="ChEBI" id="CHEBI:456216"/>
        <dbReference type="EC" id="6.3.2.6"/>
    </reaction>
</comment>
<comment type="pathway">
    <text evidence="1">Purine metabolism; IMP biosynthesis via de novo pathway; 5-amino-1-(5-phospho-D-ribosyl)imidazole-4-carboxamide from 5-amino-1-(5-phospho-D-ribosyl)imidazole-4-carboxylate: step 1/2.</text>
</comment>
<comment type="similarity">
    <text evidence="1">Belongs to the SAICAR synthetase family.</text>
</comment>
<keyword id="KW-0067">ATP-binding</keyword>
<keyword id="KW-0436">Ligase</keyword>
<keyword id="KW-0547">Nucleotide-binding</keyword>
<keyword id="KW-0658">Purine biosynthesis</keyword>
<keyword id="KW-1185">Reference proteome</keyword>
<sequence length="254" mass="29077">MARRRQLYEGKAKILFEGPEPGTLVQYFKDDATAFNAQKKGVITGKGVLNNRISEFLMQRLGEIGIPTHFVRRLNMREQLVREVEIIPIEVVIRNVAAGSMSTRLGIPEGTRLPRSIIEYYYKNDALNDPMVSEDHITAFGWASTQDMDDIVHLSLRINDFLTGLFLGVGIVLVDFKIEFGRLWENDDMRIVLADEISPDNCRLWDAKTNEKMDKDRFRRDLGRVEEAYQEVAKRLGILPEAGTRDMKGPETMQ</sequence>
<organism>
    <name type="scientific">Acidiphilium cryptum (strain JF-5)</name>
    <dbReference type="NCBI Taxonomy" id="349163"/>
    <lineage>
        <taxon>Bacteria</taxon>
        <taxon>Pseudomonadati</taxon>
        <taxon>Pseudomonadota</taxon>
        <taxon>Alphaproteobacteria</taxon>
        <taxon>Acetobacterales</taxon>
        <taxon>Acidocellaceae</taxon>
        <taxon>Acidiphilium</taxon>
    </lineage>
</organism>
<gene>
    <name evidence="1" type="primary">purC</name>
    <name type="ordered locus">Acry_0393</name>
</gene>
<feature type="chain" id="PRO_1000018660" description="Phosphoribosylaminoimidazole-succinocarboxamide synthase">
    <location>
        <begin position="1"/>
        <end position="254"/>
    </location>
</feature>
<evidence type="ECO:0000255" key="1">
    <source>
        <dbReference type="HAMAP-Rule" id="MF_00137"/>
    </source>
</evidence>
<name>PUR7_ACICJ</name>